<dbReference type="EC" id="2.7.7.48"/>
<dbReference type="EMBL" id="M58756">
    <property type="protein sequence ID" value="AAA46243.1"/>
    <property type="molecule type" value="Genomic_RNA"/>
</dbReference>
<dbReference type="PIR" id="A37946">
    <property type="entry name" value="RRXSJA"/>
</dbReference>
<dbReference type="RefSeq" id="NP_047197.1">
    <property type="nucleotide sequence ID" value="NC_001916.1"/>
</dbReference>
<dbReference type="PDB" id="2YI8">
    <property type="method" value="X-ray"/>
    <property type="resolution" value="2.30 A"/>
    <property type="chains" value="A/B/C/D/E=1-790"/>
</dbReference>
<dbReference type="PDB" id="2YI9">
    <property type="method" value="X-ray"/>
    <property type="resolution" value="2.20 A"/>
    <property type="chains" value="A/B/C/D/E=1-790"/>
</dbReference>
<dbReference type="PDB" id="2YIA">
    <property type="method" value="X-ray"/>
    <property type="resolution" value="3.02 A"/>
    <property type="chains" value="A/B/C/D/E/F/G/H=1-790"/>
</dbReference>
<dbReference type="PDB" id="2YIB">
    <property type="method" value="X-ray"/>
    <property type="resolution" value="3.80 A"/>
    <property type="chains" value="A/B/C=1-845, D=1-687"/>
</dbReference>
<dbReference type="PDB" id="3ZED">
    <property type="method" value="X-ray"/>
    <property type="resolution" value="2.20 A"/>
    <property type="chains" value="A/B/C=1-845"/>
</dbReference>
<dbReference type="PDBsum" id="2YI8"/>
<dbReference type="PDBsum" id="2YI9"/>
<dbReference type="PDBsum" id="2YIA"/>
<dbReference type="PDBsum" id="2YIB"/>
<dbReference type="PDBsum" id="3ZED"/>
<dbReference type="SMR" id="P22173"/>
<dbReference type="KEGG" id="vg:956514"/>
<dbReference type="BRENDA" id="2.7.7.48">
    <property type="organism ID" value="6986"/>
</dbReference>
<dbReference type="EvolutionaryTrace" id="P22173"/>
<dbReference type="Proteomes" id="UP000007248">
    <property type="component" value="Genome"/>
</dbReference>
<dbReference type="GO" id="GO:0044423">
    <property type="term" value="C:virion component"/>
    <property type="evidence" value="ECO:0007669"/>
    <property type="project" value="UniProtKB-KW"/>
</dbReference>
<dbReference type="GO" id="GO:0005525">
    <property type="term" value="F:GTP binding"/>
    <property type="evidence" value="ECO:0007669"/>
    <property type="project" value="UniProtKB-KW"/>
</dbReference>
<dbReference type="GO" id="GO:0003968">
    <property type="term" value="F:RNA-directed RNA polymerase activity"/>
    <property type="evidence" value="ECO:0007669"/>
    <property type="project" value="UniProtKB-KW"/>
</dbReference>
<dbReference type="GO" id="GO:0019079">
    <property type="term" value="P:viral genome replication"/>
    <property type="evidence" value="ECO:0000314"/>
    <property type="project" value="DisProt"/>
</dbReference>
<dbReference type="Gene3D" id="6.10.140.300">
    <property type="match status" value="1"/>
</dbReference>
<dbReference type="Gene3D" id="3.90.1730.10">
    <property type="entry name" value="Infectious bursal virus vp1 polymerase domain"/>
    <property type="match status" value="3"/>
</dbReference>
<dbReference type="Gene3D" id="1.20.1270.270">
    <property type="entry name" value="VP1, C-terminal extension domain"/>
    <property type="match status" value="1"/>
</dbReference>
<dbReference type="InterPro" id="IPR046750">
    <property type="entry name" value="Birnavirus_RdRp_C"/>
</dbReference>
<dbReference type="InterPro" id="IPR007100">
    <property type="entry name" value="Birnavirus_RdRp_palm"/>
</dbReference>
<dbReference type="InterPro" id="IPR046812">
    <property type="entry name" value="Birnavirus_RdRp_palm_sf"/>
</dbReference>
<dbReference type="InterPro" id="IPR046752">
    <property type="entry name" value="Birnavirus_RdRp_thumb"/>
</dbReference>
<dbReference type="InterPro" id="IPR046813">
    <property type="entry name" value="Birnavirus_RdRp_thumb_sf"/>
</dbReference>
<dbReference type="InterPro" id="IPR043502">
    <property type="entry name" value="DNA/RNA_pol_sf"/>
</dbReference>
<dbReference type="Pfam" id="PF20489">
    <property type="entry name" value="Birna_RdRp_C"/>
    <property type="match status" value="1"/>
</dbReference>
<dbReference type="Pfam" id="PF04197">
    <property type="entry name" value="Birna_RdRp_palm"/>
    <property type="match status" value="1"/>
</dbReference>
<dbReference type="Pfam" id="PF20488">
    <property type="entry name" value="Birna_VP1_thumb"/>
    <property type="match status" value="1"/>
</dbReference>
<dbReference type="SUPFAM" id="SSF56672">
    <property type="entry name" value="DNA/RNA polymerases"/>
    <property type="match status" value="1"/>
</dbReference>
<dbReference type="PROSITE" id="PS50524">
    <property type="entry name" value="RDRP_DSRNA_BIR"/>
    <property type="match status" value="1"/>
</dbReference>
<proteinExistence type="evidence at protein level"/>
<sequence length="845" mass="94467">MSDIFNSPQNKASILTALMKSTTGDVEDVLIPKRFRPAKDPLDSPQAAAQFLKDNKYRILRPRAIPTMVELETDAALPRLRQMVEDGKLKDTVSVPEGTTAFYPKYYPFHKPDHDEVGTFGAPDITLLKQLTFFLLENDFPTGPETLRQVREAIATLQYGSGSYSGQLNRLLAMKGVATGRNPNKTPKTVGYTNEQLAKLLEQTLPINTPKHEDPDLRWAPSWLINYTGDLSTDKSYLPHVTIKSSAGLPYIGKTKGDTTAEALVLADSFIRDLGRAATSADPEAGVKKTITDFWYLSCGLLFPKGERYTQVDWDKKTRNIWSAPYPTHLLLSMVSTPVMNESKLNITNTQTPSLYGFSPFHGGMDRIMTIIRDSLDNDEDLVMIYADNIYILQDNTWYSIDLEKGEANCTPQHMQAMMYYLLTRGWTNEDGSPRYNPTWATFAMNVAPSMVVDSSCLLMNLQLKTYGQGSGNAFTFLNNHLMSTIVVAEWVKAGKPNPMTKEFMDLEEKTGINFKIERELKNLRETIVEAVETAPQDGYLADGSDLPPIRPGKAVELDLLGWSAIYSRQMEMFVPVLENERLIASAAYPKGLENKALARKPGAEIAYQIVRYEAIRLVGGWNNPLLETAAKHMSLDKRKRLEVKGIDVTGFLDDWNNMSEFGGDLEGITLSEPLTNQTLVDINTPLDSFDPKARPQTPRSPKKTLDEVTTAITSGTYKDPKSAVWRLLDQRTKLRVSTLRDQALALKPASSSVDNWAEATEELAQQQQLLMKANNLLKSSLTETREALETIQSDKIIAGKSNPEKNPGTAANPVVGYGEFSEKIPLTPTQKKNAKRREKQRRNQ</sequence>
<comment type="function">
    <text evidence="1">RNA-dependent RNA polymerase which is found both free and covalently attached to the genomic RNA. May also contain guanylyl and methyl transferase activities (By similarity).</text>
</comment>
<comment type="catalytic activity">
    <reaction evidence="3">
        <text>RNA(n) + a ribonucleoside 5'-triphosphate = RNA(n+1) + diphosphate</text>
        <dbReference type="Rhea" id="RHEA:21248"/>
        <dbReference type="Rhea" id="RHEA-COMP:14527"/>
        <dbReference type="Rhea" id="RHEA-COMP:17342"/>
        <dbReference type="ChEBI" id="CHEBI:33019"/>
        <dbReference type="ChEBI" id="CHEBI:61557"/>
        <dbReference type="ChEBI" id="CHEBI:140395"/>
        <dbReference type="EC" id="2.7.7.48"/>
    </reaction>
</comment>
<comment type="subunit">
    <text evidence="1">Interacts with VP3 in the cytoplasm.</text>
</comment>
<comment type="subcellular location">
    <subcellularLocation>
        <location evidence="1">Virion</location>
    </subcellularLocation>
    <text evidence="1">Minor amounts are incorporated in the virion.</text>
</comment>
<comment type="PTM">
    <text>Exists in multiple phosphorylated forms.</text>
</comment>
<organismHost>
    <name type="scientific">Oncorhynchus mykiss</name>
    <name type="common">Rainbow trout</name>
    <name type="synonym">Salmo gairdneri</name>
    <dbReference type="NCBI Taxonomy" id="8022"/>
</organismHost>
<organismHost>
    <name type="scientific">Salmo</name>
    <dbReference type="NCBI Taxonomy" id="8028"/>
</organismHost>
<feature type="chain" id="PRO_0000221963" description="RNA-directed RNA polymerase">
    <location>
        <begin position="1"/>
        <end position="845"/>
    </location>
</feature>
<feature type="domain" description="RdRp catalytic" evidence="3">
    <location>
        <begin position="384"/>
        <end position="588"/>
    </location>
</feature>
<feature type="region of interest" description="Disordered" evidence="4">
    <location>
        <begin position="686"/>
        <end position="706"/>
    </location>
</feature>
<feature type="region of interest" description="Disordered" evidence="4">
    <location>
        <begin position="799"/>
        <end position="845"/>
    </location>
</feature>
<feature type="compositionally biased region" description="Basic residues" evidence="4">
    <location>
        <begin position="833"/>
        <end position="845"/>
    </location>
</feature>
<feature type="binding site" evidence="2">
    <location>
        <begin position="248"/>
        <end position="255"/>
    </location>
    <ligand>
        <name>GTP</name>
        <dbReference type="ChEBI" id="CHEBI:37565"/>
    </ligand>
</feature>
<feature type="helix" evidence="5">
    <location>
        <begin position="14"/>
        <end position="18"/>
    </location>
</feature>
<feature type="strand" evidence="6">
    <location>
        <begin position="23"/>
        <end position="25"/>
    </location>
</feature>
<feature type="turn" evidence="7">
    <location>
        <begin position="28"/>
        <end position="30"/>
    </location>
</feature>
<feature type="helix" evidence="5">
    <location>
        <begin position="45"/>
        <end position="54"/>
    </location>
</feature>
<feature type="strand" evidence="5">
    <location>
        <begin position="65"/>
        <end position="72"/>
    </location>
</feature>
<feature type="helix" evidence="5">
    <location>
        <begin position="73"/>
        <end position="76"/>
    </location>
</feature>
<feature type="helix" evidence="5">
    <location>
        <begin position="78"/>
        <end position="80"/>
    </location>
</feature>
<feature type="helix" evidence="5">
    <location>
        <begin position="81"/>
        <end position="85"/>
    </location>
</feature>
<feature type="strand" evidence="5">
    <location>
        <begin position="91"/>
        <end position="102"/>
    </location>
</feature>
<feature type="strand" evidence="7">
    <location>
        <begin position="111"/>
        <end position="113"/>
    </location>
</feature>
<feature type="helix" evidence="5">
    <location>
        <begin position="125"/>
        <end position="137"/>
    </location>
</feature>
<feature type="helix" evidence="5">
    <location>
        <begin position="143"/>
        <end position="156"/>
    </location>
</feature>
<feature type="strand" evidence="5">
    <location>
        <begin position="157"/>
        <end position="160"/>
    </location>
</feature>
<feature type="helix" evidence="5">
    <location>
        <begin position="164"/>
        <end position="179"/>
    </location>
</feature>
<feature type="strand" evidence="5">
    <location>
        <begin position="180"/>
        <end position="182"/>
    </location>
</feature>
<feature type="helix" evidence="5">
    <location>
        <begin position="187"/>
        <end position="190"/>
    </location>
</feature>
<feature type="helix" evidence="5">
    <location>
        <begin position="194"/>
        <end position="204"/>
    </location>
</feature>
<feature type="helix" evidence="5">
    <location>
        <begin position="221"/>
        <end position="224"/>
    </location>
</feature>
<feature type="turn" evidence="5">
    <location>
        <begin position="231"/>
        <end position="233"/>
    </location>
</feature>
<feature type="helix" evidence="5">
    <location>
        <begin position="256"/>
        <end position="278"/>
    </location>
</feature>
<feature type="helix" evidence="5">
    <location>
        <begin position="283"/>
        <end position="293"/>
    </location>
</feature>
<feature type="helix" evidence="5">
    <location>
        <begin position="295"/>
        <end position="298"/>
    </location>
</feature>
<feature type="strand" evidence="5">
    <location>
        <begin position="299"/>
        <end position="304"/>
    </location>
</feature>
<feature type="strand" evidence="5">
    <location>
        <begin position="307"/>
        <end position="310"/>
    </location>
</feature>
<feature type="helix" evidence="5">
    <location>
        <begin position="311"/>
        <end position="313"/>
    </location>
</feature>
<feature type="turn" evidence="5">
    <location>
        <begin position="314"/>
        <end position="316"/>
    </location>
</feature>
<feature type="strand" evidence="5">
    <location>
        <begin position="320"/>
        <end position="323"/>
    </location>
</feature>
<feature type="helix" evidence="5">
    <location>
        <begin position="326"/>
        <end position="340"/>
    </location>
</feature>
<feature type="turn" evidence="5">
    <location>
        <begin position="347"/>
        <end position="349"/>
    </location>
</feature>
<feature type="strand" evidence="5">
    <location>
        <begin position="350"/>
        <end position="354"/>
    </location>
</feature>
<feature type="turn" evidence="5">
    <location>
        <begin position="361"/>
        <end position="363"/>
    </location>
</feature>
<feature type="helix" evidence="5">
    <location>
        <begin position="364"/>
        <end position="377"/>
    </location>
</feature>
<feature type="strand" evidence="5">
    <location>
        <begin position="382"/>
        <end position="386"/>
    </location>
</feature>
<feature type="strand" evidence="5">
    <location>
        <begin position="389"/>
        <end position="394"/>
    </location>
</feature>
<feature type="strand" evidence="5">
    <location>
        <begin position="397"/>
        <end position="403"/>
    </location>
</feature>
<feature type="helix" evidence="5">
    <location>
        <begin position="406"/>
        <end position="409"/>
    </location>
</feature>
<feature type="helix" evidence="5">
    <location>
        <begin position="412"/>
        <end position="425"/>
    </location>
</feature>
<feature type="strand" evidence="5">
    <location>
        <begin position="434"/>
        <end position="436"/>
    </location>
</feature>
<feature type="helix" evidence="5">
    <location>
        <begin position="438"/>
        <end position="446"/>
    </location>
</feature>
<feature type="helix" evidence="5">
    <location>
        <begin position="448"/>
        <end position="452"/>
    </location>
</feature>
<feature type="strand" evidence="5">
    <location>
        <begin position="456"/>
        <end position="460"/>
    </location>
</feature>
<feature type="strand" evidence="5">
    <location>
        <begin position="462"/>
        <end position="465"/>
    </location>
</feature>
<feature type="helix" evidence="5">
    <location>
        <begin position="476"/>
        <end position="493"/>
    </location>
</feature>
<feature type="helix" evidence="5">
    <location>
        <begin position="502"/>
        <end position="505"/>
    </location>
</feature>
<feature type="helix" evidence="5">
    <location>
        <begin position="507"/>
        <end position="511"/>
    </location>
</feature>
<feature type="strand" evidence="5">
    <location>
        <begin position="515"/>
        <end position="521"/>
    </location>
</feature>
<feature type="helix" evidence="5">
    <location>
        <begin position="524"/>
        <end position="533"/>
    </location>
</feature>
<feature type="strand" evidence="5">
    <location>
        <begin position="537"/>
        <end position="539"/>
    </location>
</feature>
<feature type="turn" evidence="5">
    <location>
        <begin position="540"/>
        <end position="543"/>
    </location>
</feature>
<feature type="strand" evidence="5">
    <location>
        <begin position="556"/>
        <end position="560"/>
    </location>
</feature>
<feature type="strand" evidence="5">
    <location>
        <begin position="563"/>
        <end position="568"/>
    </location>
</feature>
<feature type="turn" evidence="5">
    <location>
        <begin position="569"/>
        <end position="572"/>
    </location>
</feature>
<feature type="strand" evidence="5">
    <location>
        <begin position="573"/>
        <end position="578"/>
    </location>
</feature>
<feature type="helix" evidence="5">
    <location>
        <begin position="580"/>
        <end position="588"/>
    </location>
</feature>
<feature type="helix" evidence="5">
    <location>
        <begin position="596"/>
        <end position="599"/>
    </location>
</feature>
<feature type="helix" evidence="5">
    <location>
        <begin position="604"/>
        <end position="618"/>
    </location>
</feature>
<feature type="helix" evidence="5">
    <location>
        <begin position="621"/>
        <end position="623"/>
    </location>
</feature>
<feature type="helix" evidence="5">
    <location>
        <begin position="625"/>
        <end position="645"/>
    </location>
</feature>
<feature type="helix" evidence="5">
    <location>
        <begin position="650"/>
        <end position="654"/>
    </location>
</feature>
<feature type="helix" evidence="5">
    <location>
        <begin position="656"/>
        <end position="659"/>
    </location>
</feature>
<feature type="turn" evidence="5">
    <location>
        <begin position="661"/>
        <end position="665"/>
    </location>
</feature>
<feature type="helix" evidence="5">
    <location>
        <begin position="677"/>
        <end position="684"/>
    </location>
</feature>
<feature type="helix" evidence="5">
    <location>
        <begin position="692"/>
        <end position="694"/>
    </location>
</feature>
<feature type="strand" evidence="5">
    <location>
        <begin position="699"/>
        <end position="701"/>
    </location>
</feature>
<feature type="helix" evidence="5">
    <location>
        <begin position="706"/>
        <end position="714"/>
    </location>
</feature>
<feature type="turn" evidence="5">
    <location>
        <begin position="715"/>
        <end position="718"/>
    </location>
</feature>
<feature type="helix" evidence="5">
    <location>
        <begin position="724"/>
        <end position="732"/>
    </location>
</feature>
<feature type="helix" evidence="5">
    <location>
        <begin position="737"/>
        <end position="739"/>
    </location>
</feature>
<feature type="helix" evidence="5">
    <location>
        <begin position="740"/>
        <end position="751"/>
    </location>
</feature>
<feature type="helix" evidence="5">
    <location>
        <begin position="757"/>
        <end position="771"/>
    </location>
</feature>
<feature type="helix" evidence="5">
    <location>
        <begin position="775"/>
        <end position="777"/>
    </location>
</feature>
<feature type="helix" evidence="5">
    <location>
        <begin position="781"/>
        <end position="790"/>
    </location>
</feature>
<protein>
    <recommendedName>
        <fullName>RNA-directed RNA polymerase</fullName>
        <shortName>RDRP</shortName>
        <ecNumber>2.7.7.48</ecNumber>
    </recommendedName>
    <alternativeName>
        <fullName>Protein VP1</fullName>
    </alternativeName>
</protein>
<reference key="1">
    <citation type="journal article" date="1991" name="Virology">
        <title>Sequence analysis of infectious pancreatic necrosis virus genome segment B and its encoded VP1 protein: a putative RNA-dependent RNA polymerase lacking the Gly-Asp-Asp motif.</title>
        <authorList>
            <person name="Duncan R."/>
            <person name="Mason C.L."/>
            <person name="Nagy E."/>
            <person name="Leong J.-A."/>
            <person name="Dobos P."/>
        </authorList>
    </citation>
    <scope>NUCLEOTIDE SEQUENCE [GENOMIC RNA]</scope>
</reference>
<evidence type="ECO:0000250" key="1"/>
<evidence type="ECO:0000255" key="2"/>
<evidence type="ECO:0000255" key="3">
    <source>
        <dbReference type="PROSITE-ProRule" id="PRU00539"/>
    </source>
</evidence>
<evidence type="ECO:0000256" key="4">
    <source>
        <dbReference type="SAM" id="MobiDB-lite"/>
    </source>
</evidence>
<evidence type="ECO:0007829" key="5">
    <source>
        <dbReference type="PDB" id="2YI9"/>
    </source>
</evidence>
<evidence type="ECO:0007829" key="6">
    <source>
        <dbReference type="PDB" id="2YIA"/>
    </source>
</evidence>
<evidence type="ECO:0007829" key="7">
    <source>
        <dbReference type="PDB" id="3ZED"/>
    </source>
</evidence>
<keyword id="KW-0002">3D-structure</keyword>
<keyword id="KW-0191">Covalent protein-RNA linkage</keyword>
<keyword id="KW-0342">GTP-binding</keyword>
<keyword id="KW-0547">Nucleotide-binding</keyword>
<keyword id="KW-0548">Nucleotidyltransferase</keyword>
<keyword id="KW-0597">Phosphoprotein</keyword>
<keyword id="KW-1185">Reference proteome</keyword>
<keyword id="KW-0696">RNA-directed RNA polymerase</keyword>
<keyword id="KW-0808">Transferase</keyword>
<keyword id="KW-0693">Viral RNA replication</keyword>
<keyword id="KW-0946">Virion</keyword>
<accession>P22173</accession>
<name>RDRP_IPNVJ</name>
<gene>
    <name type="primary">VP1</name>
</gene>
<organism>
    <name type="scientific">Infectious pancreatic necrosis virus (strain Jasper)</name>
    <name type="common">IPNV</name>
    <dbReference type="NCBI Taxonomy" id="11003"/>
    <lineage>
        <taxon>Viruses</taxon>
        <taxon>Riboviria</taxon>
        <taxon>Orthornavirae</taxon>
        <taxon>Birnaviridae</taxon>
        <taxon>Aquabirnavirus</taxon>
        <taxon>Aquabirnavirus salmonidae</taxon>
    </lineage>
</organism>